<comment type="function">
    <text evidence="2">Transcriptional repressor that plays a role in the regulation of organ identity and spikelet meristem determinacy (PubMed:32680975). Interacts with the TPR corepressors to possibly repress the expression of downstream target genes (PubMed:32680975).</text>
</comment>
<comment type="subunit">
    <text evidence="2">Interacts with TPR1, TPR2 and TPR3.</text>
</comment>
<comment type="subcellular location">
    <subcellularLocation>
        <location evidence="1 2">Nucleus</location>
    </subcellularLocation>
</comment>
<comment type="tissue specificity">
    <text evidence="2">Expressed in roots, leaves, leaf sheaths, culms, panicles, lemmas, paleas, lodicules, stamens, and pistils.</text>
</comment>
<comment type="disruption phenotype">
    <text evidence="2">Delayed transition from the spikelet to the floral meristem, inducing the formation of extra lemma-like and palea-like organs.</text>
</comment>
<accession>A3AWH5</accession>
<accession>Q7XUI6</accession>
<reference key="1">
    <citation type="journal article" date="2002" name="Nature">
        <title>Sequence and analysis of rice chromosome 4.</title>
        <authorList>
            <person name="Feng Q."/>
            <person name="Zhang Y."/>
            <person name="Hao P."/>
            <person name="Wang S."/>
            <person name="Fu G."/>
            <person name="Huang Y."/>
            <person name="Li Y."/>
            <person name="Zhu J."/>
            <person name="Liu Y."/>
            <person name="Hu X."/>
            <person name="Jia P."/>
            <person name="Zhang Y."/>
            <person name="Zhao Q."/>
            <person name="Ying K."/>
            <person name="Yu S."/>
            <person name="Tang Y."/>
            <person name="Weng Q."/>
            <person name="Zhang L."/>
            <person name="Lu Y."/>
            <person name="Mu J."/>
            <person name="Lu Y."/>
            <person name="Zhang L.S."/>
            <person name="Yu Z."/>
            <person name="Fan D."/>
            <person name="Liu X."/>
            <person name="Lu T."/>
            <person name="Li C."/>
            <person name="Wu Y."/>
            <person name="Sun T."/>
            <person name="Lei H."/>
            <person name="Li T."/>
            <person name="Hu H."/>
            <person name="Guan J."/>
            <person name="Wu M."/>
            <person name="Zhang R."/>
            <person name="Zhou B."/>
            <person name="Chen Z."/>
            <person name="Chen L."/>
            <person name="Jin Z."/>
            <person name="Wang R."/>
            <person name="Yin H."/>
            <person name="Cai Z."/>
            <person name="Ren S."/>
            <person name="Lv G."/>
            <person name="Gu W."/>
            <person name="Zhu G."/>
            <person name="Tu Y."/>
            <person name="Jia J."/>
            <person name="Zhang Y."/>
            <person name="Chen J."/>
            <person name="Kang H."/>
            <person name="Chen X."/>
            <person name="Shao C."/>
            <person name="Sun Y."/>
            <person name="Hu Q."/>
            <person name="Zhang X."/>
            <person name="Zhang W."/>
            <person name="Wang L."/>
            <person name="Ding C."/>
            <person name="Sheng H."/>
            <person name="Gu J."/>
            <person name="Chen S."/>
            <person name="Ni L."/>
            <person name="Zhu F."/>
            <person name="Chen W."/>
            <person name="Lan L."/>
            <person name="Lai Y."/>
            <person name="Cheng Z."/>
            <person name="Gu M."/>
            <person name="Jiang J."/>
            <person name="Li J."/>
            <person name="Hong G."/>
            <person name="Xue Y."/>
            <person name="Han B."/>
        </authorList>
    </citation>
    <scope>NUCLEOTIDE SEQUENCE [LARGE SCALE GENOMIC DNA]</scope>
    <source>
        <strain>cv. Nipponbare</strain>
    </source>
</reference>
<reference key="2">
    <citation type="journal article" date="2005" name="Nature">
        <title>The map-based sequence of the rice genome.</title>
        <authorList>
            <consortium name="International rice genome sequencing project (IRGSP)"/>
        </authorList>
    </citation>
    <scope>NUCLEOTIDE SEQUENCE [LARGE SCALE GENOMIC DNA]</scope>
    <source>
        <strain>cv. Nipponbare</strain>
    </source>
</reference>
<reference key="3">
    <citation type="journal article" date="2008" name="Nucleic Acids Res.">
        <title>The rice annotation project database (RAP-DB): 2008 update.</title>
        <authorList>
            <consortium name="The rice annotation project (RAP)"/>
        </authorList>
    </citation>
    <scope>GENOME REANNOTATION</scope>
    <source>
        <strain>cv. Nipponbare</strain>
    </source>
</reference>
<reference key="4">
    <citation type="journal article" date="2013" name="Rice">
        <title>Improvement of the Oryza sativa Nipponbare reference genome using next generation sequence and optical map data.</title>
        <authorList>
            <person name="Kawahara Y."/>
            <person name="de la Bastide M."/>
            <person name="Hamilton J.P."/>
            <person name="Kanamori H."/>
            <person name="McCombie W.R."/>
            <person name="Ouyang S."/>
            <person name="Schwartz D.C."/>
            <person name="Tanaka T."/>
            <person name="Wu J."/>
            <person name="Zhou S."/>
            <person name="Childs K.L."/>
            <person name="Davidson R.M."/>
            <person name="Lin H."/>
            <person name="Quesada-Ocampo L."/>
            <person name="Vaillancourt B."/>
            <person name="Sakai H."/>
            <person name="Lee S.S."/>
            <person name="Kim J."/>
            <person name="Numa H."/>
            <person name="Itoh T."/>
            <person name="Buell C.R."/>
            <person name="Matsumoto T."/>
        </authorList>
    </citation>
    <scope>GENOME REANNOTATION</scope>
    <source>
        <strain>cv. Nipponbare</strain>
    </source>
</reference>
<reference key="5">
    <citation type="journal article" date="2005" name="PLoS Biol.">
        <title>The genomes of Oryza sativa: a history of duplications.</title>
        <authorList>
            <person name="Yu J."/>
            <person name="Wang J."/>
            <person name="Lin W."/>
            <person name="Li S."/>
            <person name="Li H."/>
            <person name="Zhou J."/>
            <person name="Ni P."/>
            <person name="Dong W."/>
            <person name="Hu S."/>
            <person name="Zeng C."/>
            <person name="Zhang J."/>
            <person name="Zhang Y."/>
            <person name="Li R."/>
            <person name="Xu Z."/>
            <person name="Li S."/>
            <person name="Li X."/>
            <person name="Zheng H."/>
            <person name="Cong L."/>
            <person name="Lin L."/>
            <person name="Yin J."/>
            <person name="Geng J."/>
            <person name="Li G."/>
            <person name="Shi J."/>
            <person name="Liu J."/>
            <person name="Lv H."/>
            <person name="Li J."/>
            <person name="Wang J."/>
            <person name="Deng Y."/>
            <person name="Ran L."/>
            <person name="Shi X."/>
            <person name="Wang X."/>
            <person name="Wu Q."/>
            <person name="Li C."/>
            <person name="Ren X."/>
            <person name="Wang J."/>
            <person name="Wang X."/>
            <person name="Li D."/>
            <person name="Liu D."/>
            <person name="Zhang X."/>
            <person name="Ji Z."/>
            <person name="Zhao W."/>
            <person name="Sun Y."/>
            <person name="Zhang Z."/>
            <person name="Bao J."/>
            <person name="Han Y."/>
            <person name="Dong L."/>
            <person name="Ji J."/>
            <person name="Chen P."/>
            <person name="Wu S."/>
            <person name="Liu J."/>
            <person name="Xiao Y."/>
            <person name="Bu D."/>
            <person name="Tan J."/>
            <person name="Yang L."/>
            <person name="Ye C."/>
            <person name="Zhang J."/>
            <person name="Xu J."/>
            <person name="Zhou Y."/>
            <person name="Yu Y."/>
            <person name="Zhang B."/>
            <person name="Zhuang S."/>
            <person name="Wei H."/>
            <person name="Liu B."/>
            <person name="Lei M."/>
            <person name="Yu H."/>
            <person name="Li Y."/>
            <person name="Xu H."/>
            <person name="Wei S."/>
            <person name="He X."/>
            <person name="Fang L."/>
            <person name="Zhang Z."/>
            <person name="Zhang Y."/>
            <person name="Huang X."/>
            <person name="Su Z."/>
            <person name="Tong W."/>
            <person name="Li J."/>
            <person name="Tong Z."/>
            <person name="Li S."/>
            <person name="Ye J."/>
            <person name="Wang L."/>
            <person name="Fang L."/>
            <person name="Lei T."/>
            <person name="Chen C.-S."/>
            <person name="Chen H.-C."/>
            <person name="Xu Z."/>
            <person name="Li H."/>
            <person name="Huang H."/>
            <person name="Zhang F."/>
            <person name="Xu H."/>
            <person name="Li N."/>
            <person name="Zhao C."/>
            <person name="Li S."/>
            <person name="Dong L."/>
            <person name="Huang Y."/>
            <person name="Li L."/>
            <person name="Xi Y."/>
            <person name="Qi Q."/>
            <person name="Li W."/>
            <person name="Zhang B."/>
            <person name="Hu W."/>
            <person name="Zhang Y."/>
            <person name="Tian X."/>
            <person name="Jiao Y."/>
            <person name="Liang X."/>
            <person name="Jin J."/>
            <person name="Gao L."/>
            <person name="Zheng W."/>
            <person name="Hao B."/>
            <person name="Liu S.-M."/>
            <person name="Wang W."/>
            <person name="Yuan L."/>
            <person name="Cao M."/>
            <person name="McDermott J."/>
            <person name="Samudrala R."/>
            <person name="Wang J."/>
            <person name="Wong G.K.-S."/>
            <person name="Yang H."/>
        </authorList>
    </citation>
    <scope>NUCLEOTIDE SEQUENCE [LARGE SCALE GENOMIC DNA]</scope>
    <source>
        <strain>cv. Nipponbare</strain>
    </source>
</reference>
<reference key="6">
    <citation type="journal article" date="2003" name="Science">
        <title>Collection, mapping, and annotation of over 28,000 cDNA clones from japonica rice.</title>
        <authorList>
            <consortium name="The rice full-length cDNA consortium"/>
        </authorList>
    </citation>
    <scope>NUCLEOTIDE SEQUENCE [LARGE SCALE MRNA]</scope>
    <source>
        <strain>cv. Nipponbare</strain>
    </source>
</reference>
<reference key="7">
    <citation type="journal article" date="2020" name="Plant Physiol.">
        <title>MORE FLORET 1 encodes a MYB transcription factor that regulates spikelet development in rice.</title>
        <authorList>
            <person name="Ren D."/>
            <person name="Rao Y."/>
            <person name="Yu H."/>
            <person name="Xu Q."/>
            <person name="Cui Y."/>
            <person name="Xia S."/>
            <person name="Yu X."/>
            <person name="Liu H."/>
            <person name="Hu H."/>
            <person name="Xue D."/>
            <person name="Zeng D."/>
            <person name="Hu J."/>
            <person name="Zhang G."/>
            <person name="Gao Z."/>
            <person name="Zhu L."/>
            <person name="Zhang Q."/>
            <person name="Shen L."/>
            <person name="Guo L."/>
            <person name="Qian Q."/>
        </authorList>
    </citation>
    <scope>FUNCTION</scope>
    <scope>INTERACTION WITH TPR1; TPR2 AND TPR3</scope>
    <scope>SUBCELLULAR LOCATION</scope>
    <scope>TISSUE SPECIFICITY</scope>
    <scope>DISRUPTION PHENOTYPE</scope>
</reference>
<protein>
    <recommendedName>
        <fullName evidence="4">Myb family transcription factor MOF1</fullName>
    </recommendedName>
    <alternativeName>
        <fullName evidence="3">Protein MORE FLORET 1</fullName>
    </alternativeName>
</protein>
<dbReference type="EMBL" id="AL662954">
    <property type="protein sequence ID" value="CAD41286.1"/>
    <property type="molecule type" value="Genomic_DNA"/>
</dbReference>
<dbReference type="EMBL" id="AP008210">
    <property type="protein sequence ID" value="BAF15496.1"/>
    <property type="molecule type" value="Genomic_DNA"/>
</dbReference>
<dbReference type="EMBL" id="CM000141">
    <property type="protein sequence ID" value="EAZ31664.1"/>
    <property type="molecule type" value="Genomic_DNA"/>
</dbReference>
<dbReference type="EMBL" id="AP014960">
    <property type="protein sequence ID" value="BAS90535.1"/>
    <property type="molecule type" value="Genomic_DNA"/>
</dbReference>
<dbReference type="EMBL" id="AK101849">
    <property type="protein sequence ID" value="BAG95257.1"/>
    <property type="molecule type" value="mRNA"/>
</dbReference>
<dbReference type="RefSeq" id="XP_015634437.1">
    <property type="nucleotide sequence ID" value="XM_015778951.1"/>
</dbReference>
<dbReference type="SMR" id="A3AWH5"/>
<dbReference type="FunCoup" id="A3AWH5">
    <property type="interactions" value="57"/>
</dbReference>
<dbReference type="STRING" id="39947.Q7XUI6"/>
<dbReference type="PaxDb" id="39947-Q7XUI6"/>
<dbReference type="EnsemblPlants" id="Os04t0566600-01">
    <property type="protein sequence ID" value="Os04t0566600-01"/>
    <property type="gene ID" value="Os04g0566600"/>
</dbReference>
<dbReference type="Gramene" id="Os04t0566600-01">
    <property type="protein sequence ID" value="Os04t0566600-01"/>
    <property type="gene ID" value="Os04g0566600"/>
</dbReference>
<dbReference type="KEGG" id="dosa:Os04g0566600"/>
<dbReference type="eggNOG" id="ENOG502RM8S">
    <property type="taxonomic scope" value="Eukaryota"/>
</dbReference>
<dbReference type="HOGENOM" id="CLU_062113_0_0_1"/>
<dbReference type="InParanoid" id="A3AWH5"/>
<dbReference type="OMA" id="CLGGEHK"/>
<dbReference type="OrthoDB" id="551907at2759"/>
<dbReference type="Proteomes" id="UP000000763">
    <property type="component" value="Chromosome 4"/>
</dbReference>
<dbReference type="Proteomes" id="UP000007752">
    <property type="component" value="Chromosome 4"/>
</dbReference>
<dbReference type="Proteomes" id="UP000059680">
    <property type="component" value="Chromosome 4"/>
</dbReference>
<dbReference type="GO" id="GO:0005634">
    <property type="term" value="C:nucleus"/>
    <property type="evidence" value="ECO:0000314"/>
    <property type="project" value="UniProtKB"/>
</dbReference>
<dbReference type="GO" id="GO:0003677">
    <property type="term" value="F:DNA binding"/>
    <property type="evidence" value="ECO:0007669"/>
    <property type="project" value="UniProtKB-KW"/>
</dbReference>
<dbReference type="GO" id="GO:0003700">
    <property type="term" value="F:DNA-binding transcription factor activity"/>
    <property type="evidence" value="ECO:0007669"/>
    <property type="project" value="InterPro"/>
</dbReference>
<dbReference type="GO" id="GO:0030154">
    <property type="term" value="P:cell differentiation"/>
    <property type="evidence" value="ECO:0007669"/>
    <property type="project" value="UniProtKB-KW"/>
</dbReference>
<dbReference type="GO" id="GO:0010582">
    <property type="term" value="P:floral meristem determinacy"/>
    <property type="evidence" value="ECO:0000315"/>
    <property type="project" value="UniProtKB"/>
</dbReference>
<dbReference type="GO" id="GO:0010629">
    <property type="term" value="P:negative regulation of gene expression"/>
    <property type="evidence" value="ECO:0000314"/>
    <property type="project" value="UniProtKB"/>
</dbReference>
<dbReference type="GO" id="GO:0006355">
    <property type="term" value="P:regulation of DNA-templated transcription"/>
    <property type="evidence" value="ECO:0000314"/>
    <property type="project" value="UniProtKB"/>
</dbReference>
<dbReference type="FunFam" id="1.10.10.60:FF:000002">
    <property type="entry name" value="Myb family transcription factor"/>
    <property type="match status" value="1"/>
</dbReference>
<dbReference type="Gene3D" id="1.10.10.60">
    <property type="entry name" value="Homeodomain-like"/>
    <property type="match status" value="1"/>
</dbReference>
<dbReference type="InterPro" id="IPR009057">
    <property type="entry name" value="Homeodomain-like_sf"/>
</dbReference>
<dbReference type="InterPro" id="IPR006447">
    <property type="entry name" value="Myb_dom_plants"/>
</dbReference>
<dbReference type="InterPro" id="IPR046955">
    <property type="entry name" value="PHR1-like"/>
</dbReference>
<dbReference type="InterPro" id="IPR001005">
    <property type="entry name" value="SANT/Myb"/>
</dbReference>
<dbReference type="NCBIfam" id="TIGR01557">
    <property type="entry name" value="myb_SHAQKYF"/>
    <property type="match status" value="1"/>
</dbReference>
<dbReference type="PANTHER" id="PTHR31314:SF183">
    <property type="entry name" value="MYB FAMILY TRANSCRIPTION FACTOR MOF1"/>
    <property type="match status" value="1"/>
</dbReference>
<dbReference type="PANTHER" id="PTHR31314">
    <property type="entry name" value="MYB FAMILY TRANSCRIPTION FACTOR PHL7-LIKE"/>
    <property type="match status" value="1"/>
</dbReference>
<dbReference type="Pfam" id="PF00249">
    <property type="entry name" value="Myb_DNA-binding"/>
    <property type="match status" value="1"/>
</dbReference>
<dbReference type="SUPFAM" id="SSF46689">
    <property type="entry name" value="Homeodomain-like"/>
    <property type="match status" value="1"/>
</dbReference>
<keyword id="KW-0217">Developmental protein</keyword>
<keyword id="KW-0221">Differentiation</keyword>
<keyword id="KW-0238">DNA-binding</keyword>
<keyword id="KW-0539">Nucleus</keyword>
<keyword id="KW-1185">Reference proteome</keyword>
<keyword id="KW-0678">Repressor</keyword>
<keyword id="KW-0804">Transcription</keyword>
<keyword id="KW-0805">Transcription regulation</keyword>
<organism>
    <name type="scientific">Oryza sativa subsp. japonica</name>
    <name type="common">Rice</name>
    <dbReference type="NCBI Taxonomy" id="39947"/>
    <lineage>
        <taxon>Eukaryota</taxon>
        <taxon>Viridiplantae</taxon>
        <taxon>Streptophyta</taxon>
        <taxon>Embryophyta</taxon>
        <taxon>Tracheophyta</taxon>
        <taxon>Spermatophyta</taxon>
        <taxon>Magnoliopsida</taxon>
        <taxon>Liliopsida</taxon>
        <taxon>Poales</taxon>
        <taxon>Poaceae</taxon>
        <taxon>BOP clade</taxon>
        <taxon>Oryzoideae</taxon>
        <taxon>Oryzeae</taxon>
        <taxon>Oryzinae</taxon>
        <taxon>Oryza</taxon>
        <taxon>Oryza sativa</taxon>
    </lineage>
</organism>
<sequence length="306" mass="32743">MGSGGGGCGRNGAVRQYIRSKVPRLRWTGELHCSFVQAIEFLGGQDKATPKLILQLMGVKGLTISHVKSHLQMYRCSRLGSHGTGRRSEMQPQLQRKHSCGADEQVPREFLCPPLKRTRMGTEATYKGMQGSQGISEMRTTGTQYCIDDYMQAMAMERRIKEEGLRWQRDAAAAAAADGGAAASNLQTVGCSVQESDPFKIIKPEVHHLGPVLKLQCSKVENSGFISSSTGTAARDQPEPPPLEKCSLSLSLGPDPKCMPAIASSPSESSCILSSSSRSFSDCSGNSGCLVAPGVNLELSMSICGS</sequence>
<gene>
    <name evidence="3" type="primary">MOF1</name>
    <name evidence="5" type="ordered locus">Os04g0566600</name>
    <name evidence="4" type="ordered locus">LOC_Os04g47890</name>
    <name evidence="7" type="ORF">OsJ_15811</name>
    <name evidence="6" type="ORF">OSJNBa0005N02.4</name>
</gene>
<feature type="chain" id="PRO_0000451252" description="Myb family transcription factor MOF1">
    <location>
        <begin position="1"/>
        <end position="306"/>
    </location>
</feature>
<feature type="domain" description="HTH myb-type" evidence="1">
    <location>
        <begin position="19"/>
        <end position="79"/>
    </location>
</feature>
<feature type="DNA-binding region" description="H-T-H motif" evidence="1">
    <location>
        <begin position="50"/>
        <end position="75"/>
    </location>
</feature>
<evidence type="ECO:0000255" key="1">
    <source>
        <dbReference type="PROSITE-ProRule" id="PRU00625"/>
    </source>
</evidence>
<evidence type="ECO:0000269" key="2">
    <source>
    </source>
</evidence>
<evidence type="ECO:0000303" key="3">
    <source>
    </source>
</evidence>
<evidence type="ECO:0000305" key="4"/>
<evidence type="ECO:0000312" key="5">
    <source>
        <dbReference type="EMBL" id="BAF15496.1"/>
    </source>
</evidence>
<evidence type="ECO:0000312" key="6">
    <source>
        <dbReference type="EMBL" id="CAD41286.1"/>
    </source>
</evidence>
<evidence type="ECO:0000312" key="7">
    <source>
        <dbReference type="EMBL" id="EAZ31664.1"/>
    </source>
</evidence>
<name>MOF1_ORYSJ</name>
<proteinExistence type="evidence at protein level"/>